<protein>
    <recommendedName>
        <fullName evidence="1">Thiamine-phosphate synthase</fullName>
        <shortName evidence="1">TP synthase</shortName>
        <shortName evidence="1">TPS</shortName>
        <ecNumber evidence="1">2.5.1.3</ecNumber>
    </recommendedName>
    <alternativeName>
        <fullName evidence="1">Thiamine-phosphate pyrophosphorylase</fullName>
        <shortName evidence="1">TMP pyrophosphorylase</shortName>
        <shortName evidence="1">TMP-PPase</shortName>
    </alternativeName>
</protein>
<feature type="chain" id="PRO_1000008173" description="Thiamine-phosphate synthase">
    <location>
        <begin position="1"/>
        <end position="211"/>
    </location>
</feature>
<feature type="binding site" evidence="1">
    <location>
        <begin position="37"/>
        <end position="41"/>
    </location>
    <ligand>
        <name>4-amino-2-methyl-5-(diphosphooxymethyl)pyrimidine</name>
        <dbReference type="ChEBI" id="CHEBI:57841"/>
    </ligand>
</feature>
<feature type="binding site" evidence="1">
    <location>
        <position position="69"/>
    </location>
    <ligand>
        <name>4-amino-2-methyl-5-(diphosphooxymethyl)pyrimidine</name>
        <dbReference type="ChEBI" id="CHEBI:57841"/>
    </ligand>
</feature>
<feature type="binding site" evidence="1">
    <location>
        <position position="70"/>
    </location>
    <ligand>
        <name>Mg(2+)</name>
        <dbReference type="ChEBI" id="CHEBI:18420"/>
    </ligand>
</feature>
<feature type="binding site" evidence="1">
    <location>
        <position position="89"/>
    </location>
    <ligand>
        <name>Mg(2+)</name>
        <dbReference type="ChEBI" id="CHEBI:18420"/>
    </ligand>
</feature>
<feature type="binding site" evidence="1">
    <location>
        <position position="108"/>
    </location>
    <ligand>
        <name>4-amino-2-methyl-5-(diphosphooxymethyl)pyrimidine</name>
        <dbReference type="ChEBI" id="CHEBI:57841"/>
    </ligand>
</feature>
<feature type="binding site" evidence="1">
    <location>
        <begin position="134"/>
        <end position="136"/>
    </location>
    <ligand>
        <name>2-[(2R,5Z)-2-carboxy-4-methylthiazol-5(2H)-ylidene]ethyl phosphate</name>
        <dbReference type="ChEBI" id="CHEBI:62899"/>
    </ligand>
</feature>
<feature type="binding site" evidence="1">
    <location>
        <position position="137"/>
    </location>
    <ligand>
        <name>4-amino-2-methyl-5-(diphosphooxymethyl)pyrimidine</name>
        <dbReference type="ChEBI" id="CHEBI:57841"/>
    </ligand>
</feature>
<feature type="binding site" evidence="1">
    <location>
        <position position="166"/>
    </location>
    <ligand>
        <name>2-[(2R,5Z)-2-carboxy-4-methylthiazol-5(2H)-ylidene]ethyl phosphate</name>
        <dbReference type="ChEBI" id="CHEBI:62899"/>
    </ligand>
</feature>
<feature type="binding site" evidence="1">
    <location>
        <begin position="186"/>
        <end position="187"/>
    </location>
    <ligand>
        <name>2-[(2R,5Z)-2-carboxy-4-methylthiazol-5(2H)-ylidene]ethyl phosphate</name>
        <dbReference type="ChEBI" id="CHEBI:62899"/>
    </ligand>
</feature>
<sequence length="211" mass="23040">MYQPDFPPVPFRLGLYPVVDSVQWIERLLDAGVRTLQLRIKDRRNEEVEADVVAAIALGRRYNARLFINDYWRLAIKHQAYGVHLGQEDLQATDLNAIRAAGLRLGVSTHDDMEIDVALAARPSYIALGHVFPTQTKQMPSAPQGLEQLARHVERLADYPTVAIGGISLARAPAVIATGVGSIAVVSAITQAADWRLATAQLLEIAGVGDE</sequence>
<reference key="1">
    <citation type="journal article" date="2005" name="Nucleic Acids Res.">
        <title>Genome dynamics and diversity of Shigella species, the etiologic agents of bacillary dysentery.</title>
        <authorList>
            <person name="Yang F."/>
            <person name="Yang J."/>
            <person name="Zhang X."/>
            <person name="Chen L."/>
            <person name="Jiang Y."/>
            <person name="Yan Y."/>
            <person name="Tang X."/>
            <person name="Wang J."/>
            <person name="Xiong Z."/>
            <person name="Dong J."/>
            <person name="Xue Y."/>
            <person name="Zhu Y."/>
            <person name="Xu X."/>
            <person name="Sun L."/>
            <person name="Chen S."/>
            <person name="Nie H."/>
            <person name="Peng J."/>
            <person name="Xu J."/>
            <person name="Wang Y."/>
            <person name="Yuan Z."/>
            <person name="Wen Y."/>
            <person name="Yao Z."/>
            <person name="Shen Y."/>
            <person name="Qiang B."/>
            <person name="Hou Y."/>
            <person name="Yu J."/>
            <person name="Jin Q."/>
        </authorList>
    </citation>
    <scope>NUCLEOTIDE SEQUENCE [LARGE SCALE GENOMIC DNA]</scope>
    <source>
        <strain>Ss046</strain>
    </source>
</reference>
<dbReference type="EC" id="2.5.1.3" evidence="1"/>
<dbReference type="EMBL" id="CP000038">
    <property type="protein sequence ID" value="AAZ90671.1"/>
    <property type="molecule type" value="Genomic_DNA"/>
</dbReference>
<dbReference type="RefSeq" id="WP_000284610.1">
    <property type="nucleotide sequence ID" value="NC_007384.1"/>
</dbReference>
<dbReference type="SMR" id="Q3YUZ1"/>
<dbReference type="GeneID" id="93777901"/>
<dbReference type="KEGG" id="ssn:SSON_4166"/>
<dbReference type="HOGENOM" id="CLU_018272_3_3_6"/>
<dbReference type="UniPathway" id="UPA00060">
    <property type="reaction ID" value="UER00141"/>
</dbReference>
<dbReference type="Proteomes" id="UP000002529">
    <property type="component" value="Chromosome"/>
</dbReference>
<dbReference type="GO" id="GO:0005737">
    <property type="term" value="C:cytoplasm"/>
    <property type="evidence" value="ECO:0007669"/>
    <property type="project" value="TreeGrafter"/>
</dbReference>
<dbReference type="GO" id="GO:0000287">
    <property type="term" value="F:magnesium ion binding"/>
    <property type="evidence" value="ECO:0007669"/>
    <property type="project" value="UniProtKB-UniRule"/>
</dbReference>
<dbReference type="GO" id="GO:0004789">
    <property type="term" value="F:thiamine-phosphate diphosphorylase activity"/>
    <property type="evidence" value="ECO:0007669"/>
    <property type="project" value="UniProtKB-UniRule"/>
</dbReference>
<dbReference type="GO" id="GO:0009228">
    <property type="term" value="P:thiamine biosynthetic process"/>
    <property type="evidence" value="ECO:0007669"/>
    <property type="project" value="UniProtKB-KW"/>
</dbReference>
<dbReference type="GO" id="GO:0009229">
    <property type="term" value="P:thiamine diphosphate biosynthetic process"/>
    <property type="evidence" value="ECO:0007669"/>
    <property type="project" value="UniProtKB-UniRule"/>
</dbReference>
<dbReference type="CDD" id="cd00564">
    <property type="entry name" value="TMP_TenI"/>
    <property type="match status" value="1"/>
</dbReference>
<dbReference type="FunFam" id="3.20.20.70:FF:000064">
    <property type="entry name" value="Thiamine-phosphate synthase"/>
    <property type="match status" value="1"/>
</dbReference>
<dbReference type="Gene3D" id="3.20.20.70">
    <property type="entry name" value="Aldolase class I"/>
    <property type="match status" value="1"/>
</dbReference>
<dbReference type="HAMAP" id="MF_00097">
    <property type="entry name" value="TMP_synthase"/>
    <property type="match status" value="1"/>
</dbReference>
<dbReference type="InterPro" id="IPR013785">
    <property type="entry name" value="Aldolase_TIM"/>
</dbReference>
<dbReference type="InterPro" id="IPR036206">
    <property type="entry name" value="ThiamineP_synth_sf"/>
</dbReference>
<dbReference type="InterPro" id="IPR022998">
    <property type="entry name" value="ThiamineP_synth_TenI"/>
</dbReference>
<dbReference type="InterPro" id="IPR034291">
    <property type="entry name" value="TMP_synthase"/>
</dbReference>
<dbReference type="NCBIfam" id="NF002904">
    <property type="entry name" value="PRK03512.1"/>
    <property type="match status" value="1"/>
</dbReference>
<dbReference type="NCBIfam" id="TIGR00693">
    <property type="entry name" value="thiE"/>
    <property type="match status" value="1"/>
</dbReference>
<dbReference type="PANTHER" id="PTHR20857">
    <property type="entry name" value="THIAMINE-PHOSPHATE PYROPHOSPHORYLASE"/>
    <property type="match status" value="1"/>
</dbReference>
<dbReference type="PANTHER" id="PTHR20857:SF15">
    <property type="entry name" value="THIAMINE-PHOSPHATE SYNTHASE"/>
    <property type="match status" value="1"/>
</dbReference>
<dbReference type="Pfam" id="PF02581">
    <property type="entry name" value="TMP-TENI"/>
    <property type="match status" value="1"/>
</dbReference>
<dbReference type="SUPFAM" id="SSF51391">
    <property type="entry name" value="Thiamin phosphate synthase"/>
    <property type="match status" value="1"/>
</dbReference>
<name>THIE_SHISS</name>
<proteinExistence type="inferred from homology"/>
<accession>Q3YUZ1</accession>
<evidence type="ECO:0000255" key="1">
    <source>
        <dbReference type="HAMAP-Rule" id="MF_00097"/>
    </source>
</evidence>
<gene>
    <name evidence="1" type="primary">thiE</name>
    <name type="ordered locus">SSON_4166</name>
</gene>
<keyword id="KW-0460">Magnesium</keyword>
<keyword id="KW-0479">Metal-binding</keyword>
<keyword id="KW-1185">Reference proteome</keyword>
<keyword id="KW-0784">Thiamine biosynthesis</keyword>
<keyword id="KW-0808">Transferase</keyword>
<comment type="function">
    <text evidence="1">Condenses 4-methyl-5-(beta-hydroxyethyl)thiazole monophosphate (THZ-P) and 2-methyl-4-amino-5-hydroxymethyl pyrimidine pyrophosphate (HMP-PP) to form thiamine monophosphate (TMP).</text>
</comment>
<comment type="catalytic activity">
    <reaction evidence="1">
        <text>2-[(2R,5Z)-2-carboxy-4-methylthiazol-5(2H)-ylidene]ethyl phosphate + 4-amino-2-methyl-5-(diphosphooxymethyl)pyrimidine + 2 H(+) = thiamine phosphate + CO2 + diphosphate</text>
        <dbReference type="Rhea" id="RHEA:47844"/>
        <dbReference type="ChEBI" id="CHEBI:15378"/>
        <dbReference type="ChEBI" id="CHEBI:16526"/>
        <dbReference type="ChEBI" id="CHEBI:33019"/>
        <dbReference type="ChEBI" id="CHEBI:37575"/>
        <dbReference type="ChEBI" id="CHEBI:57841"/>
        <dbReference type="ChEBI" id="CHEBI:62899"/>
        <dbReference type="EC" id="2.5.1.3"/>
    </reaction>
</comment>
<comment type="catalytic activity">
    <reaction evidence="1">
        <text>2-(2-carboxy-4-methylthiazol-5-yl)ethyl phosphate + 4-amino-2-methyl-5-(diphosphooxymethyl)pyrimidine + 2 H(+) = thiamine phosphate + CO2 + diphosphate</text>
        <dbReference type="Rhea" id="RHEA:47848"/>
        <dbReference type="ChEBI" id="CHEBI:15378"/>
        <dbReference type="ChEBI" id="CHEBI:16526"/>
        <dbReference type="ChEBI" id="CHEBI:33019"/>
        <dbReference type="ChEBI" id="CHEBI:37575"/>
        <dbReference type="ChEBI" id="CHEBI:57841"/>
        <dbReference type="ChEBI" id="CHEBI:62890"/>
        <dbReference type="EC" id="2.5.1.3"/>
    </reaction>
</comment>
<comment type="catalytic activity">
    <reaction evidence="1">
        <text>4-methyl-5-(2-phosphooxyethyl)-thiazole + 4-amino-2-methyl-5-(diphosphooxymethyl)pyrimidine + H(+) = thiamine phosphate + diphosphate</text>
        <dbReference type="Rhea" id="RHEA:22328"/>
        <dbReference type="ChEBI" id="CHEBI:15378"/>
        <dbReference type="ChEBI" id="CHEBI:33019"/>
        <dbReference type="ChEBI" id="CHEBI:37575"/>
        <dbReference type="ChEBI" id="CHEBI:57841"/>
        <dbReference type="ChEBI" id="CHEBI:58296"/>
        <dbReference type="EC" id="2.5.1.3"/>
    </reaction>
</comment>
<comment type="cofactor">
    <cofactor evidence="1">
        <name>Mg(2+)</name>
        <dbReference type="ChEBI" id="CHEBI:18420"/>
    </cofactor>
    <text evidence="1">Binds 1 Mg(2+) ion per subunit.</text>
</comment>
<comment type="pathway">
    <text evidence="1">Cofactor biosynthesis; thiamine diphosphate biosynthesis; thiamine phosphate from 4-amino-2-methyl-5-diphosphomethylpyrimidine and 4-methyl-5-(2-phosphoethyl)-thiazole: step 1/1.</text>
</comment>
<comment type="similarity">
    <text evidence="1">Belongs to the thiamine-phosphate synthase family.</text>
</comment>
<organism>
    <name type="scientific">Shigella sonnei (strain Ss046)</name>
    <dbReference type="NCBI Taxonomy" id="300269"/>
    <lineage>
        <taxon>Bacteria</taxon>
        <taxon>Pseudomonadati</taxon>
        <taxon>Pseudomonadota</taxon>
        <taxon>Gammaproteobacteria</taxon>
        <taxon>Enterobacterales</taxon>
        <taxon>Enterobacteriaceae</taxon>
        <taxon>Shigella</taxon>
    </lineage>
</organism>